<feature type="initiator methionine" description="Removed" evidence="15">
    <location>
        <position position="1"/>
    </location>
</feature>
<feature type="chain" id="PRO_0000078284" description="Heat shock protein 105 kDa">
    <location>
        <begin position="2"/>
        <end position="858"/>
    </location>
</feature>
<feature type="region of interest" description="Disordered" evidence="3">
    <location>
        <begin position="500"/>
        <end position="584"/>
    </location>
</feature>
<feature type="region of interest" description="Disordered" evidence="3">
    <location>
        <begin position="796"/>
        <end position="858"/>
    </location>
</feature>
<feature type="compositionally biased region" description="Acidic residues" evidence="3">
    <location>
        <begin position="504"/>
        <end position="514"/>
    </location>
</feature>
<feature type="compositionally biased region" description="Polar residues" evidence="3">
    <location>
        <begin position="532"/>
        <end position="554"/>
    </location>
</feature>
<feature type="compositionally biased region" description="Basic and acidic residues" evidence="3">
    <location>
        <begin position="563"/>
        <end position="584"/>
    </location>
</feature>
<feature type="compositionally biased region" description="Basic and acidic residues" evidence="3">
    <location>
        <begin position="805"/>
        <end position="814"/>
    </location>
</feature>
<feature type="compositionally biased region" description="Basic and acidic residues" evidence="3">
    <location>
        <begin position="821"/>
        <end position="832"/>
    </location>
</feature>
<feature type="compositionally biased region" description="Polar residues" evidence="3">
    <location>
        <begin position="849"/>
        <end position="858"/>
    </location>
</feature>
<feature type="modified residue" description="N-acetylserine" evidence="15">
    <location>
        <position position="2"/>
    </location>
</feature>
<feature type="modified residue" description="N6-acetyllysine" evidence="2">
    <location>
        <position position="471"/>
    </location>
</feature>
<feature type="modified residue" description="Phosphoserine" evidence="2">
    <location>
        <position position="509"/>
    </location>
</feature>
<feature type="modified residue" description="Phosphoserine" evidence="2">
    <location>
        <position position="510"/>
    </location>
</feature>
<feature type="modified residue" description="Phosphoserine" evidence="13 14">
    <location>
        <position position="557"/>
    </location>
</feature>
<feature type="modified residue" description="Phosphothreonine" evidence="17">
    <location>
        <position position="561"/>
    </location>
</feature>
<feature type="modified residue" description="Phosphoserine" evidence="11 12 13 14 16">
    <location>
        <position position="809"/>
    </location>
</feature>
<feature type="modified residue" description="Phosphothreonine" evidence="13 16">
    <location>
        <position position="815"/>
    </location>
</feature>
<feature type="splice variant" id="VSP_054883" description="In isoform 4." evidence="8">
    <original>MSVVGLDVGSQSCYIAVARAGGIETIANEFSDRCTP</original>
    <variation>MATAAVLRGPAAHWVESFQKAREEGSGSGTWRGRWRRR</variation>
    <location>
        <begin position="1"/>
        <end position="36"/>
    </location>
</feature>
<feature type="splice variant" id="VSP_035428" description="In isoform 3." evidence="10">
    <location>
        <begin position="104"/>
        <end position="144"/>
    </location>
</feature>
<feature type="splice variant" id="VSP_002428" description="In isoform Beta." evidence="9">
    <location>
        <begin position="529"/>
        <end position="572"/>
    </location>
</feature>
<feature type="strand" evidence="18">
    <location>
        <begin position="4"/>
        <end position="8"/>
    </location>
</feature>
<feature type="strand" evidence="18">
    <location>
        <begin position="10"/>
        <end position="18"/>
    </location>
</feature>
<feature type="strand" evidence="18">
    <location>
        <begin position="20"/>
        <end position="25"/>
    </location>
</feature>
<feature type="strand" evidence="18">
    <location>
        <begin position="35"/>
        <end position="41"/>
    </location>
</feature>
<feature type="strand" evidence="18">
    <location>
        <begin position="46"/>
        <end position="49"/>
    </location>
</feature>
<feature type="helix" evidence="18">
    <location>
        <begin position="50"/>
        <end position="54"/>
    </location>
</feature>
<feature type="turn" evidence="18">
    <location>
        <begin position="55"/>
        <end position="59"/>
    </location>
</feature>
<feature type="helix" evidence="18">
    <location>
        <begin position="60"/>
        <end position="62"/>
    </location>
</feature>
<feature type="strand" evidence="18">
    <location>
        <begin position="63"/>
        <end position="66"/>
    </location>
</feature>
<feature type="helix" evidence="18">
    <location>
        <begin position="68"/>
        <end position="70"/>
    </location>
</feature>
<feature type="helix" evidence="18">
    <location>
        <begin position="78"/>
        <end position="84"/>
    </location>
</feature>
<feature type="strand" evidence="18">
    <location>
        <begin position="88"/>
        <end position="93"/>
    </location>
</feature>
<feature type="strand" evidence="18">
    <location>
        <begin position="97"/>
        <end position="104"/>
    </location>
</feature>
<feature type="strand" evidence="18">
    <location>
        <begin position="106"/>
        <end position="113"/>
    </location>
</feature>
<feature type="helix" evidence="18">
    <location>
        <begin position="114"/>
        <end position="133"/>
    </location>
</feature>
<feature type="strand" evidence="18">
    <location>
        <begin position="139"/>
        <end position="144"/>
    </location>
</feature>
<feature type="helix" evidence="18">
    <location>
        <begin position="150"/>
        <end position="163"/>
    </location>
</feature>
<feature type="strand" evidence="18">
    <location>
        <begin position="166"/>
        <end position="172"/>
    </location>
</feature>
<feature type="helix" evidence="18">
    <location>
        <begin position="173"/>
        <end position="184"/>
    </location>
</feature>
<feature type="strand" evidence="18">
    <location>
        <begin position="196"/>
        <end position="203"/>
    </location>
</feature>
<feature type="strand" evidence="18">
    <location>
        <begin position="208"/>
        <end position="216"/>
    </location>
</feature>
<feature type="strand" evidence="18">
    <location>
        <begin position="219"/>
        <end position="228"/>
    </location>
</feature>
<feature type="helix" evidence="18">
    <location>
        <begin position="233"/>
        <end position="252"/>
    </location>
</feature>
<feature type="helix" evidence="18">
    <location>
        <begin position="256"/>
        <end position="258"/>
    </location>
</feature>
<feature type="helix" evidence="18">
    <location>
        <begin position="260"/>
        <end position="276"/>
    </location>
</feature>
<feature type="turn" evidence="18">
    <location>
        <begin position="277"/>
        <end position="279"/>
    </location>
</feature>
<feature type="strand" evidence="18">
    <location>
        <begin position="284"/>
        <end position="292"/>
    </location>
</feature>
<feature type="strand" evidence="18">
    <location>
        <begin position="295"/>
        <end position="301"/>
    </location>
</feature>
<feature type="helix" evidence="18">
    <location>
        <begin position="303"/>
        <end position="309"/>
    </location>
</feature>
<feature type="helix" evidence="18">
    <location>
        <begin position="311"/>
        <end position="316"/>
    </location>
</feature>
<feature type="helix" evidence="18">
    <location>
        <begin position="318"/>
        <end position="328"/>
    </location>
</feature>
<feature type="helix" evidence="18">
    <location>
        <begin position="332"/>
        <end position="334"/>
    </location>
</feature>
<feature type="strand" evidence="18">
    <location>
        <begin position="337"/>
        <end position="343"/>
    </location>
</feature>
<feature type="helix" evidence="18">
    <location>
        <begin position="344"/>
        <end position="346"/>
    </location>
</feature>
<feature type="helix" evidence="18">
    <location>
        <begin position="348"/>
        <end position="358"/>
    </location>
</feature>
<feature type="turn" evidence="18">
    <location>
        <begin position="368"/>
        <end position="370"/>
    </location>
</feature>
<feature type="helix" evidence="18">
    <location>
        <begin position="371"/>
        <end position="379"/>
    </location>
</feature>
<evidence type="ECO:0000250" key="1">
    <source>
        <dbReference type="UniProtKB" id="Q60446"/>
    </source>
</evidence>
<evidence type="ECO:0000250" key="2">
    <source>
        <dbReference type="UniProtKB" id="Q61699"/>
    </source>
</evidence>
<evidence type="ECO:0000256" key="3">
    <source>
        <dbReference type="SAM" id="MobiDB-lite"/>
    </source>
</evidence>
<evidence type="ECO:0000269" key="4">
    <source>
    </source>
</evidence>
<evidence type="ECO:0000269" key="5">
    <source>
    </source>
</evidence>
<evidence type="ECO:0000269" key="6">
    <source>
    </source>
</evidence>
<evidence type="ECO:0000269" key="7">
    <source>
    </source>
</evidence>
<evidence type="ECO:0000303" key="8">
    <source>
    </source>
</evidence>
<evidence type="ECO:0000303" key="9">
    <source>
    </source>
</evidence>
<evidence type="ECO:0000305" key="10"/>
<evidence type="ECO:0007744" key="11">
    <source>
    </source>
</evidence>
<evidence type="ECO:0007744" key="12">
    <source>
    </source>
</evidence>
<evidence type="ECO:0007744" key="13">
    <source>
    </source>
</evidence>
<evidence type="ECO:0007744" key="14">
    <source>
    </source>
</evidence>
<evidence type="ECO:0007744" key="15">
    <source>
    </source>
</evidence>
<evidence type="ECO:0007744" key="16">
    <source>
    </source>
</evidence>
<evidence type="ECO:0007744" key="17">
    <source>
    </source>
</evidence>
<evidence type="ECO:0007829" key="18">
    <source>
        <dbReference type="PDB" id="6GFA"/>
    </source>
</evidence>
<reference key="1">
    <citation type="journal article" date="1999" name="Biochim. Biophys. Acta">
        <title>Molecular cloning, expression and localization of human 105 kDa heat shock protein, hsp105.</title>
        <authorList>
            <person name="Ishihara K."/>
            <person name="Yasuda K."/>
            <person name="Hatayama T."/>
        </authorList>
    </citation>
    <scope>NUCLEOTIDE SEQUENCE [MRNA] (ISOFORMS ALPHA AND BETA)</scope>
    <scope>SUBCELLULAR LOCATION</scope>
</reference>
<reference key="2">
    <citation type="journal article" date="1998" name="Int. J. Cancer">
        <title>Characterization of human colon cancer antigens recognized by autologous antibodies.</title>
        <authorList>
            <person name="Scanlan M.J."/>
            <person name="Chen Y.-T."/>
            <person name="Williamson B."/>
            <person name="Gure A.O."/>
            <person name="Stockert E."/>
            <person name="Gordan J.D."/>
            <person name="Tuereci O."/>
            <person name="Sahin U."/>
            <person name="Pfreundschuh M."/>
            <person name="Old L.J."/>
        </authorList>
    </citation>
    <scope>NUCLEOTIDE SEQUENCE [MRNA] (ISOFORM ALPHA)</scope>
    <source>
        <tissue>Colon carcinoma</tissue>
    </source>
</reference>
<reference key="3">
    <citation type="journal article" date="1996" name="DNA Res.">
        <title>Prediction of the coding sequences of unidentified human genes. VI. The coding sequences of 80 new genes (KIAA0201-KIAA0280) deduced by analysis of cDNA clones from cell line KG-1 and brain.</title>
        <authorList>
            <person name="Nagase T."/>
            <person name="Seki N."/>
            <person name="Ishikawa K."/>
            <person name="Ohira M."/>
            <person name="Kawarabayasi Y."/>
            <person name="Ohara O."/>
            <person name="Tanaka A."/>
            <person name="Kotani H."/>
            <person name="Miyajima N."/>
            <person name="Nomura N."/>
        </authorList>
    </citation>
    <scope>NUCLEOTIDE SEQUENCE [LARGE SCALE MRNA] (ISOFORM ALPHA)</scope>
    <source>
        <tissue>Bone marrow</tissue>
    </source>
</reference>
<reference key="4">
    <citation type="journal article" date="2004" name="Nat. Genet.">
        <title>Complete sequencing and characterization of 21,243 full-length human cDNAs.</title>
        <authorList>
            <person name="Ota T."/>
            <person name="Suzuki Y."/>
            <person name="Nishikawa T."/>
            <person name="Otsuki T."/>
            <person name="Sugiyama T."/>
            <person name="Irie R."/>
            <person name="Wakamatsu A."/>
            <person name="Hayashi K."/>
            <person name="Sato H."/>
            <person name="Nagai K."/>
            <person name="Kimura K."/>
            <person name="Makita H."/>
            <person name="Sekine M."/>
            <person name="Obayashi M."/>
            <person name="Nishi T."/>
            <person name="Shibahara T."/>
            <person name="Tanaka T."/>
            <person name="Ishii S."/>
            <person name="Yamamoto J."/>
            <person name="Saito K."/>
            <person name="Kawai Y."/>
            <person name="Isono Y."/>
            <person name="Nakamura Y."/>
            <person name="Nagahari K."/>
            <person name="Murakami K."/>
            <person name="Yasuda T."/>
            <person name="Iwayanagi T."/>
            <person name="Wagatsuma M."/>
            <person name="Shiratori A."/>
            <person name="Sudo H."/>
            <person name="Hosoiri T."/>
            <person name="Kaku Y."/>
            <person name="Kodaira H."/>
            <person name="Kondo H."/>
            <person name="Sugawara M."/>
            <person name="Takahashi M."/>
            <person name="Kanda K."/>
            <person name="Yokoi T."/>
            <person name="Furuya T."/>
            <person name="Kikkawa E."/>
            <person name="Omura Y."/>
            <person name="Abe K."/>
            <person name="Kamihara K."/>
            <person name="Katsuta N."/>
            <person name="Sato K."/>
            <person name="Tanikawa M."/>
            <person name="Yamazaki M."/>
            <person name="Ninomiya K."/>
            <person name="Ishibashi T."/>
            <person name="Yamashita H."/>
            <person name="Murakawa K."/>
            <person name="Fujimori K."/>
            <person name="Tanai H."/>
            <person name="Kimata M."/>
            <person name="Watanabe M."/>
            <person name="Hiraoka S."/>
            <person name="Chiba Y."/>
            <person name="Ishida S."/>
            <person name="Ono Y."/>
            <person name="Takiguchi S."/>
            <person name="Watanabe S."/>
            <person name="Yosida M."/>
            <person name="Hotuta T."/>
            <person name="Kusano J."/>
            <person name="Kanehori K."/>
            <person name="Takahashi-Fujii A."/>
            <person name="Hara H."/>
            <person name="Tanase T.-O."/>
            <person name="Nomura Y."/>
            <person name="Togiya S."/>
            <person name="Komai F."/>
            <person name="Hara R."/>
            <person name="Takeuchi K."/>
            <person name="Arita M."/>
            <person name="Imose N."/>
            <person name="Musashino K."/>
            <person name="Yuuki H."/>
            <person name="Oshima A."/>
            <person name="Sasaki N."/>
            <person name="Aotsuka S."/>
            <person name="Yoshikawa Y."/>
            <person name="Matsunawa H."/>
            <person name="Ichihara T."/>
            <person name="Shiohata N."/>
            <person name="Sano S."/>
            <person name="Moriya S."/>
            <person name="Momiyama H."/>
            <person name="Satoh N."/>
            <person name="Takami S."/>
            <person name="Terashima Y."/>
            <person name="Suzuki O."/>
            <person name="Nakagawa S."/>
            <person name="Senoh A."/>
            <person name="Mizoguchi H."/>
            <person name="Goto Y."/>
            <person name="Shimizu F."/>
            <person name="Wakebe H."/>
            <person name="Hishigaki H."/>
            <person name="Watanabe T."/>
            <person name="Sugiyama A."/>
            <person name="Takemoto M."/>
            <person name="Kawakami B."/>
            <person name="Yamazaki M."/>
            <person name="Watanabe K."/>
            <person name="Kumagai A."/>
            <person name="Itakura S."/>
            <person name="Fukuzumi Y."/>
            <person name="Fujimori Y."/>
            <person name="Komiyama M."/>
            <person name="Tashiro H."/>
            <person name="Tanigami A."/>
            <person name="Fujiwara T."/>
            <person name="Ono T."/>
            <person name="Yamada K."/>
            <person name="Fujii Y."/>
            <person name="Ozaki K."/>
            <person name="Hirao M."/>
            <person name="Ohmori Y."/>
            <person name="Kawabata A."/>
            <person name="Hikiji T."/>
            <person name="Kobatake N."/>
            <person name="Inagaki H."/>
            <person name="Ikema Y."/>
            <person name="Okamoto S."/>
            <person name="Okitani R."/>
            <person name="Kawakami T."/>
            <person name="Noguchi S."/>
            <person name="Itoh T."/>
            <person name="Shigeta K."/>
            <person name="Senba T."/>
            <person name="Matsumura K."/>
            <person name="Nakajima Y."/>
            <person name="Mizuno T."/>
            <person name="Morinaga M."/>
            <person name="Sasaki M."/>
            <person name="Togashi T."/>
            <person name="Oyama M."/>
            <person name="Hata H."/>
            <person name="Watanabe M."/>
            <person name="Komatsu T."/>
            <person name="Mizushima-Sugano J."/>
            <person name="Satoh T."/>
            <person name="Shirai Y."/>
            <person name="Takahashi Y."/>
            <person name="Nakagawa K."/>
            <person name="Okumura K."/>
            <person name="Nagase T."/>
            <person name="Nomura N."/>
            <person name="Kikuchi H."/>
            <person name="Masuho Y."/>
            <person name="Yamashita R."/>
            <person name="Nakai K."/>
            <person name="Yada T."/>
            <person name="Nakamura Y."/>
            <person name="Ohara O."/>
            <person name="Isogai T."/>
            <person name="Sugano S."/>
        </authorList>
    </citation>
    <scope>NUCLEOTIDE SEQUENCE [LARGE SCALE MRNA] (ISOFORM 4)</scope>
    <source>
        <tissue>Testis</tissue>
    </source>
</reference>
<reference key="5">
    <citation type="journal article" date="2004" name="Nature">
        <title>The DNA sequence and analysis of human chromosome 13.</title>
        <authorList>
            <person name="Dunham A."/>
            <person name="Matthews L.H."/>
            <person name="Burton J."/>
            <person name="Ashurst J.L."/>
            <person name="Howe K.L."/>
            <person name="Ashcroft K.J."/>
            <person name="Beare D.M."/>
            <person name="Burford D.C."/>
            <person name="Hunt S.E."/>
            <person name="Griffiths-Jones S."/>
            <person name="Jones M.C."/>
            <person name="Keenan S.J."/>
            <person name="Oliver K."/>
            <person name="Scott C.E."/>
            <person name="Ainscough R."/>
            <person name="Almeida J.P."/>
            <person name="Ambrose K.D."/>
            <person name="Andrews D.T."/>
            <person name="Ashwell R.I.S."/>
            <person name="Babbage A.K."/>
            <person name="Bagguley C.L."/>
            <person name="Bailey J."/>
            <person name="Bannerjee R."/>
            <person name="Barlow K.F."/>
            <person name="Bates K."/>
            <person name="Beasley H."/>
            <person name="Bird C.P."/>
            <person name="Bray-Allen S."/>
            <person name="Brown A.J."/>
            <person name="Brown J.Y."/>
            <person name="Burrill W."/>
            <person name="Carder C."/>
            <person name="Carter N.P."/>
            <person name="Chapman J.C."/>
            <person name="Clamp M.E."/>
            <person name="Clark S.Y."/>
            <person name="Clarke G."/>
            <person name="Clee C.M."/>
            <person name="Clegg S.C."/>
            <person name="Cobley V."/>
            <person name="Collins J.E."/>
            <person name="Corby N."/>
            <person name="Coville G.J."/>
            <person name="Deloukas P."/>
            <person name="Dhami P."/>
            <person name="Dunham I."/>
            <person name="Dunn M."/>
            <person name="Earthrowl M.E."/>
            <person name="Ellington A.G."/>
            <person name="Faulkner L."/>
            <person name="Frankish A.G."/>
            <person name="Frankland J."/>
            <person name="French L."/>
            <person name="Garner P."/>
            <person name="Garnett J."/>
            <person name="Gilbert J.G.R."/>
            <person name="Gilson C.J."/>
            <person name="Ghori J."/>
            <person name="Grafham D.V."/>
            <person name="Gribble S.M."/>
            <person name="Griffiths C."/>
            <person name="Hall R.E."/>
            <person name="Hammond S."/>
            <person name="Harley J.L."/>
            <person name="Hart E.A."/>
            <person name="Heath P.D."/>
            <person name="Howden P.J."/>
            <person name="Huckle E.J."/>
            <person name="Hunt P.J."/>
            <person name="Hunt A.R."/>
            <person name="Johnson C."/>
            <person name="Johnson D."/>
            <person name="Kay M."/>
            <person name="Kimberley A.M."/>
            <person name="King A."/>
            <person name="Laird G.K."/>
            <person name="Langford C.J."/>
            <person name="Lawlor S."/>
            <person name="Leongamornlert D.A."/>
            <person name="Lloyd D.M."/>
            <person name="Lloyd C."/>
            <person name="Loveland J.E."/>
            <person name="Lovell J."/>
            <person name="Martin S."/>
            <person name="Mashreghi-Mohammadi M."/>
            <person name="McLaren S.J."/>
            <person name="McMurray A."/>
            <person name="Milne S."/>
            <person name="Moore M.J.F."/>
            <person name="Nickerson T."/>
            <person name="Palmer S.A."/>
            <person name="Pearce A.V."/>
            <person name="Peck A.I."/>
            <person name="Pelan S."/>
            <person name="Phillimore B."/>
            <person name="Porter K.M."/>
            <person name="Rice C.M."/>
            <person name="Searle S."/>
            <person name="Sehra H.K."/>
            <person name="Shownkeen R."/>
            <person name="Skuce C.D."/>
            <person name="Smith M."/>
            <person name="Steward C.A."/>
            <person name="Sycamore N."/>
            <person name="Tester J."/>
            <person name="Thomas D.W."/>
            <person name="Tracey A."/>
            <person name="Tromans A."/>
            <person name="Tubby B."/>
            <person name="Wall M."/>
            <person name="Wallis J.M."/>
            <person name="West A.P."/>
            <person name="Whitehead S.L."/>
            <person name="Willey D.L."/>
            <person name="Wilming L."/>
            <person name="Wray P.W."/>
            <person name="Wright M.W."/>
            <person name="Young L."/>
            <person name="Coulson A."/>
            <person name="Durbin R.M."/>
            <person name="Hubbard T."/>
            <person name="Sulston J.E."/>
            <person name="Beck S."/>
            <person name="Bentley D.R."/>
            <person name="Rogers J."/>
            <person name="Ross M.T."/>
        </authorList>
    </citation>
    <scope>NUCLEOTIDE SEQUENCE [LARGE SCALE GENOMIC DNA]</scope>
</reference>
<reference key="6">
    <citation type="submission" date="2005-07" db="EMBL/GenBank/DDBJ databases">
        <authorList>
            <person name="Mural R.J."/>
            <person name="Istrail S."/>
            <person name="Sutton G.G."/>
            <person name="Florea L."/>
            <person name="Halpern A.L."/>
            <person name="Mobarry C.M."/>
            <person name="Lippert R."/>
            <person name="Walenz B."/>
            <person name="Shatkay H."/>
            <person name="Dew I."/>
            <person name="Miller J.R."/>
            <person name="Flanigan M.J."/>
            <person name="Edwards N.J."/>
            <person name="Bolanos R."/>
            <person name="Fasulo D."/>
            <person name="Halldorsson B.V."/>
            <person name="Hannenhalli S."/>
            <person name="Turner R."/>
            <person name="Yooseph S."/>
            <person name="Lu F."/>
            <person name="Nusskern D.R."/>
            <person name="Shue B.C."/>
            <person name="Zheng X.H."/>
            <person name="Zhong F."/>
            <person name="Delcher A.L."/>
            <person name="Huson D.H."/>
            <person name="Kravitz S.A."/>
            <person name="Mouchard L."/>
            <person name="Reinert K."/>
            <person name="Remington K.A."/>
            <person name="Clark A.G."/>
            <person name="Waterman M.S."/>
            <person name="Eichler E.E."/>
            <person name="Adams M.D."/>
            <person name="Hunkapiller M.W."/>
            <person name="Myers E.W."/>
            <person name="Venter J.C."/>
        </authorList>
    </citation>
    <scope>NUCLEOTIDE SEQUENCE [LARGE SCALE GENOMIC DNA]</scope>
</reference>
<reference key="7">
    <citation type="journal article" date="2004" name="Genome Res.">
        <title>The status, quality, and expansion of the NIH full-length cDNA project: the Mammalian Gene Collection (MGC).</title>
        <authorList>
            <consortium name="The MGC Project Team"/>
        </authorList>
    </citation>
    <scope>NUCLEOTIDE SEQUENCE [LARGE SCALE MRNA] (ISOFORM ALPHA)</scope>
    <source>
        <tissue>Testis</tissue>
    </source>
</reference>
<reference key="8">
    <citation type="submission" date="2008-12" db="UniProtKB">
        <authorList>
            <person name="Lubec G."/>
            <person name="Chen W.-Q."/>
            <person name="Sun Y."/>
        </authorList>
    </citation>
    <scope>PROTEIN SEQUENCE OF 332-346 AND 375-388</scope>
    <scope>IDENTIFICATION BY MASS SPECTROMETRY</scope>
    <source>
        <tissue>Fetal brain cortex</tissue>
    </source>
</reference>
<reference key="9">
    <citation type="journal article" date="2000" name="Brain Res.">
        <title>The distribution and localization of hsp110 in brain.</title>
        <authorList>
            <person name="Hylander B.L."/>
            <person name="Chen X."/>
            <person name="Graf P.C.F."/>
            <person name="Subjeck J.R."/>
        </authorList>
    </citation>
    <scope>TISSUE SPECIFICITY</scope>
</reference>
<reference key="10">
    <citation type="journal article" date="2003" name="Nature">
        <title>Proteomic characterization of the human centrosome by protein correlation profiling.</title>
        <authorList>
            <person name="Andersen J.S."/>
            <person name="Wilkinson C.J."/>
            <person name="Mayor T."/>
            <person name="Mortensen P."/>
            <person name="Nigg E.A."/>
            <person name="Mann M."/>
        </authorList>
    </citation>
    <scope>IDENTIFICATION BY MASS SPECTROMETRY</scope>
    <source>
        <tissue>Lymphoblast</tissue>
    </source>
</reference>
<reference key="11">
    <citation type="journal article" date="2005" name="Cancer Sci.">
        <title>DNA vaccination of HSP105 leads to tumor rejection of colorectal cancer and melanoma in mice through activation of both CD4 T cells and CD8 T cells.</title>
        <authorList>
            <person name="Miyazaki M."/>
            <person name="Nakatsura T."/>
            <person name="Yokomine K."/>
            <person name="Senju S."/>
            <person name="Monji M."/>
            <person name="Hosaka S."/>
            <person name="Komori H."/>
            <person name="Yoshitake Y."/>
            <person name="Motomura Y."/>
            <person name="Minohara M."/>
            <person name="Kubo T."/>
            <person name="Ishihara K."/>
            <person name="Hatayama T."/>
            <person name="Ogawa M."/>
            <person name="Nishimura Y."/>
        </authorList>
    </citation>
    <scope>TISSUE SPECIFICITY</scope>
</reference>
<reference key="12">
    <citation type="journal article" date="2006" name="Cell">
        <title>Global, in vivo, and site-specific phosphorylation dynamics in signaling networks.</title>
        <authorList>
            <person name="Olsen J.V."/>
            <person name="Blagoev B."/>
            <person name="Gnad F."/>
            <person name="Macek B."/>
            <person name="Kumar C."/>
            <person name="Mortensen P."/>
            <person name="Mann M."/>
        </authorList>
    </citation>
    <scope>PHOSPHORYLATION [LARGE SCALE ANALYSIS] AT SER-809</scope>
    <scope>IDENTIFICATION BY MASS SPECTROMETRY [LARGE SCALE ANALYSIS]</scope>
    <source>
        <tissue>Cervix carcinoma</tissue>
    </source>
</reference>
<reference key="13">
    <citation type="journal article" date="2008" name="Proc. Natl. Acad. Sci. U.S.A.">
        <title>A quantitative atlas of mitotic phosphorylation.</title>
        <authorList>
            <person name="Dephoure N."/>
            <person name="Zhou C."/>
            <person name="Villen J."/>
            <person name="Beausoleil S.A."/>
            <person name="Bakalarski C.E."/>
            <person name="Elledge S.J."/>
            <person name="Gygi S.P."/>
        </authorList>
    </citation>
    <scope>IDENTIFICATION BY MASS SPECTROMETRY [LARGE SCALE ANALYSIS]</scope>
    <source>
        <tissue>Cervix carcinoma</tissue>
    </source>
</reference>
<reference key="14">
    <citation type="journal article" date="2009" name="Anal. Chem.">
        <title>Lys-N and trypsin cover complementary parts of the phosphoproteome in a refined SCX-based approach.</title>
        <authorList>
            <person name="Gauci S."/>
            <person name="Helbig A.O."/>
            <person name="Slijper M."/>
            <person name="Krijgsveld J."/>
            <person name="Heck A.J."/>
            <person name="Mohammed S."/>
        </authorList>
    </citation>
    <scope>IDENTIFICATION BY MASS SPECTROMETRY [LARGE SCALE ANALYSIS]</scope>
</reference>
<reference key="15">
    <citation type="journal article" date="2009" name="Mol. Cell. Proteomics">
        <title>Large-scale proteomics analysis of the human kinome.</title>
        <authorList>
            <person name="Oppermann F.S."/>
            <person name="Gnad F."/>
            <person name="Olsen J.V."/>
            <person name="Hornberger R."/>
            <person name="Greff Z."/>
            <person name="Keri G."/>
            <person name="Mann M."/>
            <person name="Daub H."/>
        </authorList>
    </citation>
    <scope>PHOSPHORYLATION [LARGE SCALE ANALYSIS] AT SER-809</scope>
    <scope>IDENTIFICATION BY MASS SPECTROMETRY [LARGE SCALE ANALYSIS]</scope>
</reference>
<reference key="16">
    <citation type="journal article" date="2010" name="Sci. Signal.">
        <title>Quantitative phosphoproteomics reveals widespread full phosphorylation site occupancy during mitosis.</title>
        <authorList>
            <person name="Olsen J.V."/>
            <person name="Vermeulen M."/>
            <person name="Santamaria A."/>
            <person name="Kumar C."/>
            <person name="Miller M.L."/>
            <person name="Jensen L.J."/>
            <person name="Gnad F."/>
            <person name="Cox J."/>
            <person name="Jensen T.S."/>
            <person name="Nigg E.A."/>
            <person name="Brunak S."/>
            <person name="Mann M."/>
        </authorList>
    </citation>
    <scope>PHOSPHORYLATION [LARGE SCALE ANALYSIS] AT SER-557; SER-809 AND THR-815</scope>
    <scope>IDENTIFICATION BY MASS SPECTROMETRY [LARGE SCALE ANALYSIS]</scope>
    <source>
        <tissue>Cervix carcinoma</tissue>
    </source>
</reference>
<reference key="17">
    <citation type="journal article" date="2011" name="BMC Syst. Biol.">
        <title>Initial characterization of the human central proteome.</title>
        <authorList>
            <person name="Burkard T.R."/>
            <person name="Planyavsky M."/>
            <person name="Kaupe I."/>
            <person name="Breitwieser F.P."/>
            <person name="Buerckstuemmer T."/>
            <person name="Bennett K.L."/>
            <person name="Superti-Furga G."/>
            <person name="Colinge J."/>
        </authorList>
    </citation>
    <scope>IDENTIFICATION BY MASS SPECTROMETRY [LARGE SCALE ANALYSIS]</scope>
</reference>
<reference key="18">
    <citation type="journal article" date="2011" name="Sci. Signal.">
        <title>System-wide temporal characterization of the proteome and phosphoproteome of human embryonic stem cell differentiation.</title>
        <authorList>
            <person name="Rigbolt K.T."/>
            <person name="Prokhorova T.A."/>
            <person name="Akimov V."/>
            <person name="Henningsen J."/>
            <person name="Johansen P.T."/>
            <person name="Kratchmarova I."/>
            <person name="Kassem M."/>
            <person name="Mann M."/>
            <person name="Olsen J.V."/>
            <person name="Blagoev B."/>
        </authorList>
    </citation>
    <scope>PHOSPHORYLATION [LARGE SCALE ANALYSIS] AT SER-557 AND SER-809</scope>
    <scope>IDENTIFICATION BY MASS SPECTROMETRY [LARGE SCALE ANALYSIS]</scope>
</reference>
<reference key="19">
    <citation type="journal article" date="2012" name="Mol. Cell. Proteomics">
        <title>Comparative large-scale characterisation of plant vs. mammal proteins reveals similar and idiosyncratic N-alpha acetylation features.</title>
        <authorList>
            <person name="Bienvenut W.V."/>
            <person name="Sumpton D."/>
            <person name="Martinez A."/>
            <person name="Lilla S."/>
            <person name="Espagne C."/>
            <person name="Meinnel T."/>
            <person name="Giglione C."/>
        </authorList>
    </citation>
    <scope>ACETYLATION [LARGE SCALE ANALYSIS] AT SER-2</scope>
    <scope>CLEAVAGE OF INITIATOR METHIONINE [LARGE SCALE ANALYSIS]</scope>
    <scope>IDENTIFICATION BY MASS SPECTROMETRY [LARGE SCALE ANALYSIS]</scope>
</reference>
<reference key="20">
    <citation type="journal article" date="2013" name="J. Proteome Res.">
        <title>Toward a comprehensive characterization of a human cancer cell phosphoproteome.</title>
        <authorList>
            <person name="Zhou H."/>
            <person name="Di Palma S."/>
            <person name="Preisinger C."/>
            <person name="Peng M."/>
            <person name="Polat A.N."/>
            <person name="Heck A.J."/>
            <person name="Mohammed S."/>
        </authorList>
    </citation>
    <scope>PHOSPHORYLATION [LARGE SCALE ANALYSIS] AT SER-809 AND THR-815</scope>
    <scope>IDENTIFICATION BY MASS SPECTROMETRY [LARGE SCALE ANALYSIS]</scope>
    <source>
        <tissue>Cervix carcinoma</tissue>
        <tissue>Erythroleukemia</tissue>
    </source>
</reference>
<reference key="21">
    <citation type="journal article" date="2014" name="J. Biol. Chem.">
        <title>Binding of human nucleotide exchange factors to heat shock protein 70 (Hsp70) generates functionally distinct complexes in vitro.</title>
        <authorList>
            <person name="Rauch J.N."/>
            <person name="Gestwicki J.E."/>
        </authorList>
    </citation>
    <scope>FUNCTION</scope>
    <scope>INTERACTION WITH HSPA1A AND HSPA1B</scope>
</reference>
<reference key="22">
    <citation type="journal article" date="2014" name="J. Proteomics">
        <title>An enzyme assisted RP-RPLC approach for in-depth analysis of human liver phosphoproteome.</title>
        <authorList>
            <person name="Bian Y."/>
            <person name="Song C."/>
            <person name="Cheng K."/>
            <person name="Dong M."/>
            <person name="Wang F."/>
            <person name="Huang J."/>
            <person name="Sun D."/>
            <person name="Wang L."/>
            <person name="Ye M."/>
            <person name="Zou H."/>
        </authorList>
    </citation>
    <scope>PHOSPHORYLATION [LARGE SCALE ANALYSIS] AT THR-561</scope>
    <scope>IDENTIFICATION BY MASS SPECTROMETRY [LARGE SCALE ANALYSIS]</scope>
    <source>
        <tissue>Liver</tissue>
    </source>
</reference>
<organism>
    <name type="scientific">Homo sapiens</name>
    <name type="common">Human</name>
    <dbReference type="NCBI Taxonomy" id="9606"/>
    <lineage>
        <taxon>Eukaryota</taxon>
        <taxon>Metazoa</taxon>
        <taxon>Chordata</taxon>
        <taxon>Craniata</taxon>
        <taxon>Vertebrata</taxon>
        <taxon>Euteleostomi</taxon>
        <taxon>Mammalia</taxon>
        <taxon>Eutheria</taxon>
        <taxon>Euarchontoglires</taxon>
        <taxon>Primates</taxon>
        <taxon>Haplorrhini</taxon>
        <taxon>Catarrhini</taxon>
        <taxon>Hominidae</taxon>
        <taxon>Homo</taxon>
    </lineage>
</organism>
<comment type="function">
    <text evidence="1 2 6">Acts as a nucleotide-exchange factor (NEF) for chaperone proteins HSPA1A and HSPA1B, promoting the release of ADP from HSPA1A/B thereby triggering client/substrate protein release (PubMed:24318877). Prevents the aggregation of denatured proteins in cells under severe stress, on which the ATP levels decrease markedly. Inhibits HSPA8/HSC70 ATPase and chaperone activities (By similarity).</text>
</comment>
<comment type="subunit">
    <text evidence="2 6">Interacts with HSPA8/HSC70 (By similarity). Interacts with HSPA1A (via NBD) and HSPA1B (via NBD) (PubMed:24318877).</text>
</comment>
<comment type="interaction">
    <interactant intactId="EBI-356829">
        <id>Q92598</id>
    </interactant>
    <interactant intactId="EBI-9356686">
        <id>Q96BE0</id>
    </interactant>
    <organismsDiffer>false</organismsDiffer>
    <experiments>3</experiments>
</comment>
<comment type="interaction">
    <interactant intactId="EBI-356829">
        <id>Q92598</id>
    </interactant>
    <interactant intactId="EBI-309727">
        <id>Q62392</id>
        <label>Phlda1</label>
    </interactant>
    <organismsDiffer>true</organismsDiffer>
    <experiments>2</experiments>
</comment>
<comment type="subcellular location">
    <subcellularLocation>
        <location evidence="7">Cytoplasm</location>
    </subcellularLocation>
</comment>
<comment type="alternative products">
    <event type="alternative splicing"/>
    <isoform>
        <id>Q92598-1</id>
        <name>Alpha</name>
        <sequence type="displayed"/>
    </isoform>
    <isoform>
        <id>Q92598-2</id>
        <name>Beta</name>
        <sequence type="described" ref="VSP_002428"/>
    </isoform>
    <isoform>
        <id>Q92598-3</id>
        <name>3</name>
        <sequence type="described" ref="VSP_035428"/>
    </isoform>
    <isoform>
        <id>Q92598-4</id>
        <name>4</name>
        <sequence type="described" ref="VSP_054883"/>
    </isoform>
</comment>
<comment type="tissue specificity">
    <text evidence="4 5">Highly expressed in testis. Present at lower levels in most brain regions, except cerebellum. Overexpressed in cancer cells.</text>
</comment>
<comment type="PTM">
    <text evidence="2">Phosphorylation on Ser-509 may be important for regulation of the HSPA8/HSC70 chaperone activity.</text>
</comment>
<comment type="similarity">
    <text evidence="10">Belongs to the heat shock protein 70 family.</text>
</comment>
<comment type="sequence caution" evidence="10">
    <conflict type="erroneous initiation">
        <sequence resource="EMBL-CDS" id="AAC18044"/>
    </conflict>
</comment>
<comment type="sequence caution" evidence="10">
    <conflict type="erroneous initiation">
        <sequence resource="EMBL-CDS" id="BAA13192"/>
    </conflict>
</comment>
<comment type="online information" name="Atlas of Genetics and Cytogenetics in Oncology and Haematology">
    <link uri="https://atlasgeneticsoncology.org/gene/40891/HSPH1"/>
</comment>
<name>HS105_HUMAN</name>
<sequence length="858" mass="96865">MSVVGLDVGSQSCYIAVARAGGIETIANEFSDRCTPSVISFGSKNRTIGVAAKNQQITHANNTVSNFKRFHGRAFNDPFIQKEKENLSYDLVPLKNGGVGIKVMYMGEEHLFSVEQITAMLLTKLKETAENSLKKPVTDCVISVPSFFTDAERRSVLDAAQIVGLNCLRLMNDMTAVALNYGIYKQDLPSLDEKPRIVVFVDMGHSAFQVSACAFNKGKLKVLGTAFDPFLGGKNFDEKLVEHFCAEFKTKYKLDAKSKIRALLRLYQECEKLKKLMSSNSTDLPLNIECFMNDKDVSGKMNRSQFEELCAELLQKIEVPLYSLLEQTHLKVEDVSAVEIVGGATRIPAVKERIAKFFGKDISTTLNADEAVARGCALQCAILSPAFKVREFSVTDAVPFPISLIWNHDSEDTEGVHEVFSRNHAAPFSKVLTFLRRGPFELEAFYSDPQGVPYPEAKIGRFVVQNVSAQKDGEKSRVKVKVRVNTHGIFTISTASMVEKVPTEENEMSSEADMECLNQRPPENPDTDKNVQQDNSEAGTQPQVQTDAQQTSQSPPSPELTSEENKIPDADKANEKKVDQPPEAKKPKIKVVNVELPIEANLVWQLGKDLLNMYIETEGKMIMQDKLEKERNDAKNAVEEYVYEFRDKLCGPYEKFICEQDHQNFLRLLTETEDWLYEEGEDQAKQAYVDKLEELMKIGTPVKVRFQEAEERPKMFEELGQRLQHYAKIAADFRNKDEKYNHIDESEMKKVEKSVNEVMEWMNNVMNAQAKKSLDQDPVVRAQEIKTKIKELNNTCEPVVTQPKPKIESPKLERTPNGPNIDKKEEDLEDKNNFGAEPPHQNGECYPNEKNSVNMDLD</sequence>
<protein>
    <recommendedName>
        <fullName>Heat shock protein 105 kDa</fullName>
    </recommendedName>
    <alternativeName>
        <fullName>Antigen NY-CO-25</fullName>
    </alternativeName>
    <alternativeName>
        <fullName>Heat shock 110 kDa protein</fullName>
    </alternativeName>
    <alternativeName>
        <fullName>Heat shock protein family H member 1</fullName>
    </alternativeName>
</protein>
<keyword id="KW-0002">3D-structure</keyword>
<keyword id="KW-0007">Acetylation</keyword>
<keyword id="KW-0025">Alternative splicing</keyword>
<keyword id="KW-0067">ATP-binding</keyword>
<keyword id="KW-0963">Cytoplasm</keyword>
<keyword id="KW-0903">Direct protein sequencing</keyword>
<keyword id="KW-0547">Nucleotide-binding</keyword>
<keyword id="KW-0597">Phosphoprotein</keyword>
<keyword id="KW-1267">Proteomics identification</keyword>
<keyword id="KW-1185">Reference proteome</keyword>
<keyword id="KW-0346">Stress response</keyword>
<dbReference type="EMBL" id="AB003333">
    <property type="protein sequence ID" value="BAA34779.1"/>
    <property type="molecule type" value="mRNA"/>
</dbReference>
<dbReference type="EMBL" id="AB003334">
    <property type="protein sequence ID" value="BAA34780.1"/>
    <property type="molecule type" value="mRNA"/>
</dbReference>
<dbReference type="EMBL" id="AF039695">
    <property type="protein sequence ID" value="AAC18044.1"/>
    <property type="status" value="ALT_INIT"/>
    <property type="molecule type" value="mRNA"/>
</dbReference>
<dbReference type="EMBL" id="D86956">
    <property type="protein sequence ID" value="BAA13192.2"/>
    <property type="status" value="ALT_INIT"/>
    <property type="molecule type" value="mRNA"/>
</dbReference>
<dbReference type="EMBL" id="AK302430">
    <property type="protein sequence ID" value="BAG63733.1"/>
    <property type="molecule type" value="mRNA"/>
</dbReference>
<dbReference type="EMBL" id="AL137142">
    <property type="status" value="NOT_ANNOTATED_CDS"/>
    <property type="molecule type" value="Genomic_DNA"/>
</dbReference>
<dbReference type="EMBL" id="CH471075">
    <property type="protein sequence ID" value="EAX08479.1"/>
    <property type="molecule type" value="Genomic_DNA"/>
</dbReference>
<dbReference type="EMBL" id="CH471075">
    <property type="protein sequence ID" value="EAX08482.1"/>
    <property type="molecule type" value="Genomic_DNA"/>
</dbReference>
<dbReference type="EMBL" id="BC037553">
    <property type="protein sequence ID" value="AAH37553.1"/>
    <property type="molecule type" value="mRNA"/>
</dbReference>
<dbReference type="CCDS" id="CCDS66525.1">
    <molecule id="Q92598-2"/>
</dbReference>
<dbReference type="CCDS" id="CCDS66526.1">
    <molecule id="Q92598-4"/>
</dbReference>
<dbReference type="CCDS" id="CCDS9340.1">
    <molecule id="Q92598-1"/>
</dbReference>
<dbReference type="RefSeq" id="NP_001273432.1">
    <molecule id="Q92598-2"/>
    <property type="nucleotide sequence ID" value="NM_001286503.2"/>
</dbReference>
<dbReference type="RefSeq" id="NP_001273433.1">
    <molecule id="Q92598-4"/>
    <property type="nucleotide sequence ID" value="NM_001286504.1"/>
</dbReference>
<dbReference type="RefSeq" id="NP_001273434.1">
    <property type="nucleotide sequence ID" value="NM_001286505.1"/>
</dbReference>
<dbReference type="RefSeq" id="NP_006635.2">
    <molecule id="Q92598-1"/>
    <property type="nucleotide sequence ID" value="NM_006644.3"/>
</dbReference>
<dbReference type="PDB" id="6GFA">
    <property type="method" value="X-ray"/>
    <property type="resolution" value="2.00 A"/>
    <property type="chains" value="A=1-380"/>
</dbReference>
<dbReference type="PDBsum" id="6GFA"/>
<dbReference type="SMR" id="Q92598"/>
<dbReference type="BioGRID" id="116022">
    <property type="interactions" value="450"/>
</dbReference>
<dbReference type="CORUM" id="Q92598"/>
<dbReference type="FunCoup" id="Q92598">
    <property type="interactions" value="3489"/>
</dbReference>
<dbReference type="IntAct" id="Q92598">
    <property type="interactions" value="141"/>
</dbReference>
<dbReference type="MINT" id="Q92598"/>
<dbReference type="STRING" id="9606.ENSP00000487365"/>
<dbReference type="ChEMBL" id="CHEMBL3706560"/>
<dbReference type="DrugBank" id="DB12695">
    <property type="generic name" value="Phenethyl Isothiocyanate"/>
</dbReference>
<dbReference type="GlyCosmos" id="Q92598">
    <property type="glycosylation" value="2 sites, 1 glycan"/>
</dbReference>
<dbReference type="GlyGen" id="Q92598">
    <property type="glycosylation" value="5 sites, 1 N-linked glycan (1 site), 1 O-linked glycan (4 sites)"/>
</dbReference>
<dbReference type="iPTMnet" id="Q92598"/>
<dbReference type="MetOSite" id="Q92598"/>
<dbReference type="PhosphoSitePlus" id="Q92598"/>
<dbReference type="SwissPalm" id="Q92598"/>
<dbReference type="BioMuta" id="HSPH1"/>
<dbReference type="DMDM" id="2495344"/>
<dbReference type="REPRODUCTION-2DPAGE" id="Q92598"/>
<dbReference type="CPTAC" id="CPTAC-526"/>
<dbReference type="CPTAC" id="CPTAC-527"/>
<dbReference type="jPOST" id="Q92598"/>
<dbReference type="MassIVE" id="Q92598"/>
<dbReference type="PaxDb" id="9606-ENSP00000318687"/>
<dbReference type="PeptideAtlas" id="Q92598"/>
<dbReference type="ProteomicsDB" id="5525"/>
<dbReference type="ProteomicsDB" id="75344">
    <molecule id="Q92598-1"/>
</dbReference>
<dbReference type="ProteomicsDB" id="75345">
    <molecule id="Q92598-2"/>
</dbReference>
<dbReference type="ProteomicsDB" id="75346">
    <molecule id="Q92598-3"/>
</dbReference>
<dbReference type="Pumba" id="Q92598"/>
<dbReference type="Antibodypedia" id="22778">
    <property type="antibodies" value="527 antibodies from 39 providers"/>
</dbReference>
<dbReference type="DNASU" id="10808"/>
<dbReference type="Ensembl" id="ENST00000320027.10">
    <molecule id="Q92598-1"/>
    <property type="protein sequence ID" value="ENSP00000318687.5"/>
    <property type="gene ID" value="ENSG00000120694.20"/>
</dbReference>
<dbReference type="Ensembl" id="ENST00000380405.7">
    <molecule id="Q92598-2"/>
    <property type="protein sequence ID" value="ENSP00000369768.4"/>
    <property type="gene ID" value="ENSG00000120694.20"/>
</dbReference>
<dbReference type="Ensembl" id="ENST00000630972.2">
    <molecule id="Q92598-4"/>
    <property type="protein sequence ID" value="ENSP00000487365.1"/>
    <property type="gene ID" value="ENSG00000120694.20"/>
</dbReference>
<dbReference type="GeneID" id="10808"/>
<dbReference type="KEGG" id="hsa:10808"/>
<dbReference type="MANE-Select" id="ENST00000320027.10">
    <property type="protein sequence ID" value="ENSP00000318687.5"/>
    <property type="RefSeq nucleotide sequence ID" value="NM_006644.4"/>
    <property type="RefSeq protein sequence ID" value="NP_006635.2"/>
</dbReference>
<dbReference type="UCSC" id="uc001utj.5">
    <molecule id="Q92598-1"/>
    <property type="organism name" value="human"/>
</dbReference>
<dbReference type="AGR" id="HGNC:16969"/>
<dbReference type="CTD" id="10808"/>
<dbReference type="DisGeNET" id="10808"/>
<dbReference type="GeneCards" id="HSPH1"/>
<dbReference type="HGNC" id="HGNC:16969">
    <property type="gene designation" value="HSPH1"/>
</dbReference>
<dbReference type="HPA" id="ENSG00000120694">
    <property type="expression patterns" value="Low tissue specificity"/>
</dbReference>
<dbReference type="MIM" id="610703">
    <property type="type" value="gene"/>
</dbReference>
<dbReference type="neXtProt" id="NX_Q92598"/>
<dbReference type="OpenTargets" id="ENSG00000120694"/>
<dbReference type="PharmGKB" id="PA134869917"/>
<dbReference type="VEuPathDB" id="HostDB:ENSG00000120694"/>
<dbReference type="eggNOG" id="KOG0103">
    <property type="taxonomic scope" value="Eukaryota"/>
</dbReference>
<dbReference type="GeneTree" id="ENSGT00940000159635"/>
<dbReference type="HOGENOM" id="CLU_005965_5_1_1"/>
<dbReference type="InParanoid" id="Q92598"/>
<dbReference type="OMA" id="APVHIEC"/>
<dbReference type="OrthoDB" id="434160at2759"/>
<dbReference type="PAN-GO" id="Q92598">
    <property type="GO annotations" value="3 GO annotations based on evolutionary models"/>
</dbReference>
<dbReference type="PhylomeDB" id="Q92598"/>
<dbReference type="TreeFam" id="TF105043"/>
<dbReference type="PathwayCommons" id="Q92598"/>
<dbReference type="Reactome" id="R-HSA-3000484">
    <property type="pathway name" value="Scavenging by Class F Receptors"/>
</dbReference>
<dbReference type="Reactome" id="R-HSA-3371453">
    <property type="pathway name" value="Regulation of HSF1-mediated heat shock response"/>
</dbReference>
<dbReference type="SignaLink" id="Q92598"/>
<dbReference type="SIGNOR" id="Q92598"/>
<dbReference type="BioGRID-ORCS" id="10808">
    <property type="hits" value="10 hits in 1162 CRISPR screens"/>
</dbReference>
<dbReference type="CD-CODE" id="804901D1">
    <property type="entry name" value="Nuclear speckle"/>
</dbReference>
<dbReference type="CD-CODE" id="91857CE7">
    <property type="entry name" value="Nucleolus"/>
</dbReference>
<dbReference type="CD-CODE" id="FB4E32DD">
    <property type="entry name" value="Presynaptic clusters and postsynaptic densities"/>
</dbReference>
<dbReference type="ChiTaRS" id="HSPH1">
    <property type="organism name" value="human"/>
</dbReference>
<dbReference type="GeneWiki" id="HSPH1"/>
<dbReference type="GenomeRNAi" id="10808"/>
<dbReference type="Pharos" id="Q92598">
    <property type="development level" value="Tbio"/>
</dbReference>
<dbReference type="PRO" id="PR:Q92598"/>
<dbReference type="Proteomes" id="UP000005640">
    <property type="component" value="Chromosome 13"/>
</dbReference>
<dbReference type="RNAct" id="Q92598">
    <property type="molecule type" value="protein"/>
</dbReference>
<dbReference type="Bgee" id="ENSG00000120694">
    <property type="expression patterns" value="Expressed in primordial germ cell in gonad and 202 other cell types or tissues"/>
</dbReference>
<dbReference type="ExpressionAtlas" id="Q92598">
    <property type="expression patterns" value="baseline and differential"/>
</dbReference>
<dbReference type="GO" id="GO:0005737">
    <property type="term" value="C:cytoplasm"/>
    <property type="evidence" value="ECO:0000314"/>
    <property type="project" value="BHF-UCL"/>
</dbReference>
<dbReference type="GO" id="GO:0005829">
    <property type="term" value="C:cytosol"/>
    <property type="evidence" value="ECO:0000314"/>
    <property type="project" value="HPA"/>
</dbReference>
<dbReference type="GO" id="GO:0071682">
    <property type="term" value="C:endocytic vesicle lumen"/>
    <property type="evidence" value="ECO:0000304"/>
    <property type="project" value="Reactome"/>
</dbReference>
<dbReference type="GO" id="GO:0070062">
    <property type="term" value="C:extracellular exosome"/>
    <property type="evidence" value="ECO:0007005"/>
    <property type="project" value="UniProtKB"/>
</dbReference>
<dbReference type="GO" id="GO:0005576">
    <property type="term" value="C:extracellular region"/>
    <property type="evidence" value="ECO:0000304"/>
    <property type="project" value="BHF-UCL"/>
</dbReference>
<dbReference type="GO" id="GO:0005874">
    <property type="term" value="C:microtubule"/>
    <property type="evidence" value="ECO:0007669"/>
    <property type="project" value="Ensembl"/>
</dbReference>
<dbReference type="GO" id="GO:0005654">
    <property type="term" value="C:nucleoplasm"/>
    <property type="evidence" value="ECO:0000314"/>
    <property type="project" value="HPA"/>
</dbReference>
<dbReference type="GO" id="GO:0005634">
    <property type="term" value="C:nucleus"/>
    <property type="evidence" value="ECO:0000318"/>
    <property type="project" value="GO_Central"/>
</dbReference>
<dbReference type="GO" id="GO:0032991">
    <property type="term" value="C:protein-containing complex"/>
    <property type="evidence" value="ECO:0000314"/>
    <property type="project" value="UniProtKB"/>
</dbReference>
<dbReference type="GO" id="GO:0000774">
    <property type="term" value="F:adenyl-nucleotide exchange factor activity"/>
    <property type="evidence" value="ECO:0000314"/>
    <property type="project" value="UniProtKB"/>
</dbReference>
<dbReference type="GO" id="GO:0043014">
    <property type="term" value="F:alpha-tubulin binding"/>
    <property type="evidence" value="ECO:0007669"/>
    <property type="project" value="Ensembl"/>
</dbReference>
<dbReference type="GO" id="GO:0005524">
    <property type="term" value="F:ATP binding"/>
    <property type="evidence" value="ECO:0007669"/>
    <property type="project" value="UniProtKB-KW"/>
</dbReference>
<dbReference type="GO" id="GO:0140662">
    <property type="term" value="F:ATP-dependent protein folding chaperone"/>
    <property type="evidence" value="ECO:0007669"/>
    <property type="project" value="InterPro"/>
</dbReference>
<dbReference type="GO" id="GO:0051085">
    <property type="term" value="P:chaperone cofactor-dependent protein refolding"/>
    <property type="evidence" value="ECO:0007669"/>
    <property type="project" value="Ensembl"/>
</dbReference>
<dbReference type="GO" id="GO:0045345">
    <property type="term" value="P:positive regulation of MHC class I biosynthetic process"/>
    <property type="evidence" value="ECO:0000304"/>
    <property type="project" value="BHF-UCL"/>
</dbReference>
<dbReference type="GO" id="GO:0051135">
    <property type="term" value="P:positive regulation of NK T cell activation"/>
    <property type="evidence" value="ECO:0000304"/>
    <property type="project" value="BHF-UCL"/>
</dbReference>
<dbReference type="GO" id="GO:0006457">
    <property type="term" value="P:protein folding"/>
    <property type="evidence" value="ECO:0000318"/>
    <property type="project" value="GO_Central"/>
</dbReference>
<dbReference type="GO" id="GO:0006986">
    <property type="term" value="P:response to unfolded protein"/>
    <property type="evidence" value="ECO:0000304"/>
    <property type="project" value="ProtInc"/>
</dbReference>
<dbReference type="CDD" id="cd11739">
    <property type="entry name" value="ASKHA_NBD_HSP70_HSPH1"/>
    <property type="match status" value="1"/>
</dbReference>
<dbReference type="FunFam" id="1.20.1270.10:FF:000002">
    <property type="entry name" value="Heat shock 70 kDa protein 4"/>
    <property type="match status" value="1"/>
</dbReference>
<dbReference type="FunFam" id="3.30.30.30:FF:000002">
    <property type="entry name" value="Heat shock 70 kDa protein 4"/>
    <property type="match status" value="1"/>
</dbReference>
<dbReference type="FunFam" id="3.30.420.40:FF:000171">
    <property type="entry name" value="Heat shock 70 kDa protein 4"/>
    <property type="match status" value="1"/>
</dbReference>
<dbReference type="FunFam" id="3.90.640.10:FF:000004">
    <property type="entry name" value="Heat shock 70 kDa protein 4"/>
    <property type="match status" value="1"/>
</dbReference>
<dbReference type="FunFam" id="3.30.420.40:FF:000243">
    <property type="entry name" value="Heat shock protein 105 kDa"/>
    <property type="match status" value="1"/>
</dbReference>
<dbReference type="FunFam" id="1.20.1270.10:FF:000012">
    <property type="entry name" value="Heat shock protein 105 kDa isoform 1"/>
    <property type="match status" value="1"/>
</dbReference>
<dbReference type="FunFam" id="2.60.34.10:FF:000007">
    <property type="entry name" value="Heat shock protein 105 kDa isoform 1"/>
    <property type="match status" value="1"/>
</dbReference>
<dbReference type="FunFam" id="3.30.420.40:FF:000495">
    <property type="entry name" value="Heat shock protein 4b"/>
    <property type="match status" value="1"/>
</dbReference>
<dbReference type="FunFam" id="3.30.420.40:FF:000767">
    <property type="entry name" value="Heat shock protein 70 (HSP70)-4, putative"/>
    <property type="match status" value="1"/>
</dbReference>
<dbReference type="Gene3D" id="1.20.1270.10">
    <property type="match status" value="2"/>
</dbReference>
<dbReference type="Gene3D" id="3.30.30.30">
    <property type="match status" value="1"/>
</dbReference>
<dbReference type="Gene3D" id="3.30.420.40">
    <property type="match status" value="2"/>
</dbReference>
<dbReference type="Gene3D" id="3.90.640.10">
    <property type="entry name" value="Actin, Chain A, domain 4"/>
    <property type="match status" value="1"/>
</dbReference>
<dbReference type="Gene3D" id="2.60.34.10">
    <property type="entry name" value="Substrate Binding Domain Of DNAk, Chain A, domain 1"/>
    <property type="match status" value="1"/>
</dbReference>
<dbReference type="InterPro" id="IPR043129">
    <property type="entry name" value="ATPase_NBD"/>
</dbReference>
<dbReference type="InterPro" id="IPR018181">
    <property type="entry name" value="Heat_shock_70_CS"/>
</dbReference>
<dbReference type="InterPro" id="IPR029048">
    <property type="entry name" value="HSP70_C_sf"/>
</dbReference>
<dbReference type="InterPro" id="IPR029047">
    <property type="entry name" value="HSP70_peptide-bd_sf"/>
</dbReference>
<dbReference type="InterPro" id="IPR013126">
    <property type="entry name" value="Hsp_70_fam"/>
</dbReference>
<dbReference type="InterPro" id="IPR042053">
    <property type="entry name" value="HSPH1_NBD"/>
</dbReference>
<dbReference type="PANTHER" id="PTHR45639:SF2">
    <property type="entry name" value="HEAT SHOCK PROTEIN 105 KDA"/>
    <property type="match status" value="1"/>
</dbReference>
<dbReference type="PANTHER" id="PTHR45639">
    <property type="entry name" value="HSC70CB, ISOFORM G-RELATED"/>
    <property type="match status" value="1"/>
</dbReference>
<dbReference type="Pfam" id="PF00012">
    <property type="entry name" value="HSP70"/>
    <property type="match status" value="1"/>
</dbReference>
<dbReference type="PRINTS" id="PR00301">
    <property type="entry name" value="HEATSHOCK70"/>
</dbReference>
<dbReference type="SUPFAM" id="SSF53067">
    <property type="entry name" value="Actin-like ATPase domain"/>
    <property type="match status" value="2"/>
</dbReference>
<dbReference type="SUPFAM" id="SSF100934">
    <property type="entry name" value="Heat shock protein 70kD (HSP70), C-terminal subdomain"/>
    <property type="match status" value="2"/>
</dbReference>
<dbReference type="SUPFAM" id="SSF100920">
    <property type="entry name" value="Heat shock protein 70kD (HSP70), peptide-binding domain"/>
    <property type="match status" value="1"/>
</dbReference>
<dbReference type="PROSITE" id="PS01036">
    <property type="entry name" value="HSP70_3"/>
    <property type="match status" value="1"/>
</dbReference>
<gene>
    <name type="primary">HSPH1</name>
    <name type="synonym">HSP105</name>
    <name type="synonym">HSP110</name>
    <name type="synonym">KIAA0201</name>
</gene>
<accession>Q92598</accession>
<accession>B4DYH1</accession>
<accession>O95739</accession>
<accession>Q5TBM6</accession>
<accession>Q5TBM7</accession>
<accession>Q5TBM8</accession>
<accession>Q9UPC4</accession>
<proteinExistence type="evidence at protein level"/>